<keyword id="KW-0687">Ribonucleoprotein</keyword>
<keyword id="KW-0689">Ribosomal protein</keyword>
<keyword id="KW-0694">RNA-binding</keyword>
<keyword id="KW-0699">rRNA-binding</keyword>
<accession>A8EY61</accession>
<protein>
    <recommendedName>
        <fullName evidence="1">Large ribosomal subunit protein bL20</fullName>
    </recommendedName>
    <alternativeName>
        <fullName evidence="2">50S ribosomal protein L20</fullName>
    </alternativeName>
</protein>
<sequence>MTRAKSGKISKNRHKKILKLAKGYRGRANSCFRVAIAKVEKALQYAYRDRRNRKRNFRGLWIQRINAAVRTHGLIYSQFMGTLKKAGIDIDRKVLAELAVNNSDGFASIVEKAKAHI</sequence>
<evidence type="ECO:0000255" key="1">
    <source>
        <dbReference type="HAMAP-Rule" id="MF_00382"/>
    </source>
</evidence>
<evidence type="ECO:0000305" key="2"/>
<gene>
    <name evidence="1" type="primary">rplT</name>
    <name type="ordered locus">A1E_01745</name>
</gene>
<organism>
    <name type="scientific">Rickettsia canadensis (strain McKiel)</name>
    <dbReference type="NCBI Taxonomy" id="293613"/>
    <lineage>
        <taxon>Bacteria</taxon>
        <taxon>Pseudomonadati</taxon>
        <taxon>Pseudomonadota</taxon>
        <taxon>Alphaproteobacteria</taxon>
        <taxon>Rickettsiales</taxon>
        <taxon>Rickettsiaceae</taxon>
        <taxon>Rickettsieae</taxon>
        <taxon>Rickettsia</taxon>
        <taxon>belli group</taxon>
    </lineage>
</organism>
<reference key="1">
    <citation type="submission" date="2007-09" db="EMBL/GenBank/DDBJ databases">
        <title>Complete genome sequence of Rickettsia canadensis.</title>
        <authorList>
            <person name="Madan A."/>
            <person name="Fahey J."/>
            <person name="Helton E."/>
            <person name="Ketteman M."/>
            <person name="Madan A."/>
            <person name="Rodrigues S."/>
            <person name="Sanchez A."/>
            <person name="Whiting M."/>
            <person name="Dasch G."/>
            <person name="Eremeeva M."/>
        </authorList>
    </citation>
    <scope>NUCLEOTIDE SEQUENCE [LARGE SCALE GENOMIC DNA]</scope>
    <source>
        <strain>McKiel</strain>
    </source>
</reference>
<dbReference type="EMBL" id="CP000409">
    <property type="protein sequence ID" value="ABV73294.1"/>
    <property type="molecule type" value="Genomic_DNA"/>
</dbReference>
<dbReference type="RefSeq" id="WP_012148493.1">
    <property type="nucleotide sequence ID" value="NC_009879.1"/>
</dbReference>
<dbReference type="SMR" id="A8EY61"/>
<dbReference type="STRING" id="293613.A1E_01745"/>
<dbReference type="KEGG" id="rcm:A1E_01745"/>
<dbReference type="eggNOG" id="COG0292">
    <property type="taxonomic scope" value="Bacteria"/>
</dbReference>
<dbReference type="HOGENOM" id="CLU_123265_0_1_5"/>
<dbReference type="Proteomes" id="UP000007056">
    <property type="component" value="Chromosome"/>
</dbReference>
<dbReference type="GO" id="GO:1990904">
    <property type="term" value="C:ribonucleoprotein complex"/>
    <property type="evidence" value="ECO:0007669"/>
    <property type="project" value="UniProtKB-KW"/>
</dbReference>
<dbReference type="GO" id="GO:0005840">
    <property type="term" value="C:ribosome"/>
    <property type="evidence" value="ECO:0007669"/>
    <property type="project" value="UniProtKB-KW"/>
</dbReference>
<dbReference type="GO" id="GO:0019843">
    <property type="term" value="F:rRNA binding"/>
    <property type="evidence" value="ECO:0007669"/>
    <property type="project" value="UniProtKB-UniRule"/>
</dbReference>
<dbReference type="GO" id="GO:0003735">
    <property type="term" value="F:structural constituent of ribosome"/>
    <property type="evidence" value="ECO:0007669"/>
    <property type="project" value="InterPro"/>
</dbReference>
<dbReference type="GO" id="GO:0000027">
    <property type="term" value="P:ribosomal large subunit assembly"/>
    <property type="evidence" value="ECO:0007669"/>
    <property type="project" value="UniProtKB-UniRule"/>
</dbReference>
<dbReference type="GO" id="GO:0006412">
    <property type="term" value="P:translation"/>
    <property type="evidence" value="ECO:0007669"/>
    <property type="project" value="InterPro"/>
</dbReference>
<dbReference type="CDD" id="cd07026">
    <property type="entry name" value="Ribosomal_L20"/>
    <property type="match status" value="1"/>
</dbReference>
<dbReference type="FunFam" id="1.10.1900.20:FF:000001">
    <property type="entry name" value="50S ribosomal protein L20"/>
    <property type="match status" value="1"/>
</dbReference>
<dbReference type="Gene3D" id="6.10.160.10">
    <property type="match status" value="1"/>
</dbReference>
<dbReference type="Gene3D" id="1.10.1900.20">
    <property type="entry name" value="Ribosomal protein L20"/>
    <property type="match status" value="1"/>
</dbReference>
<dbReference type="HAMAP" id="MF_00382">
    <property type="entry name" value="Ribosomal_bL20"/>
    <property type="match status" value="1"/>
</dbReference>
<dbReference type="InterPro" id="IPR005813">
    <property type="entry name" value="Ribosomal_bL20"/>
</dbReference>
<dbReference type="InterPro" id="IPR049946">
    <property type="entry name" value="RIBOSOMAL_L20_CS"/>
</dbReference>
<dbReference type="InterPro" id="IPR035566">
    <property type="entry name" value="Ribosomal_protein_bL20_C"/>
</dbReference>
<dbReference type="NCBIfam" id="TIGR01032">
    <property type="entry name" value="rplT_bact"/>
    <property type="match status" value="1"/>
</dbReference>
<dbReference type="PANTHER" id="PTHR10986">
    <property type="entry name" value="39S RIBOSOMAL PROTEIN L20"/>
    <property type="match status" value="1"/>
</dbReference>
<dbReference type="Pfam" id="PF00453">
    <property type="entry name" value="Ribosomal_L20"/>
    <property type="match status" value="1"/>
</dbReference>
<dbReference type="PRINTS" id="PR00062">
    <property type="entry name" value="RIBOSOMALL20"/>
</dbReference>
<dbReference type="SUPFAM" id="SSF74731">
    <property type="entry name" value="Ribosomal protein L20"/>
    <property type="match status" value="1"/>
</dbReference>
<dbReference type="PROSITE" id="PS00937">
    <property type="entry name" value="RIBOSOMAL_L20"/>
    <property type="match status" value="1"/>
</dbReference>
<feature type="chain" id="PRO_1000049056" description="Large ribosomal subunit protein bL20">
    <location>
        <begin position="1"/>
        <end position="117"/>
    </location>
</feature>
<name>RL20_RICCK</name>
<proteinExistence type="inferred from homology"/>
<comment type="function">
    <text evidence="1">Binds directly to 23S ribosomal RNA and is necessary for the in vitro assembly process of the 50S ribosomal subunit. It is not involved in the protein synthesizing functions of that subunit.</text>
</comment>
<comment type="similarity">
    <text evidence="1">Belongs to the bacterial ribosomal protein bL20 family.</text>
</comment>